<comment type="function">
    <text evidence="1">Ion channel inhibitor.</text>
</comment>
<comment type="subcellular location">
    <subcellularLocation>
        <location evidence="1">Secreted</location>
    </subcellularLocation>
</comment>
<comment type="tissue specificity">
    <text>Expressed by the venom gland.</text>
</comment>
<comment type="domain">
    <text evidence="1">The presence of a 'disulfide through disulfide knot' structurally defines this protein as a knottin.</text>
</comment>
<comment type="similarity">
    <text evidence="3">Belongs to the neurotoxin 10 (Hwtx-1) family. 13 (Hntx-13) subfamily.</text>
</comment>
<protein>
    <recommendedName>
        <fullName>U7-theraphotoxin-Hhn1j</fullName>
        <shortName>U7-TRTX-Hhn1j</shortName>
    </recommendedName>
    <alternativeName>
        <fullName>Hainantoxin-XIII-12</fullName>
        <shortName>HNTX-XIII-12</shortName>
    </alternativeName>
</protein>
<evidence type="ECO:0000250" key="1"/>
<evidence type="ECO:0000255" key="2"/>
<evidence type="ECO:0000305" key="3"/>
<proteinExistence type="evidence at transcript level"/>
<sequence>MKTAIFTVVLALAVFAVLSFGWEANEKALSEEFTELIHEKEAASETEARECRYFWGECHDHMPCCDWLVCRYKWLITYNICVWNRTFPEK</sequence>
<reference key="1">
    <citation type="journal article" date="2010" name="J. Proteome Res.">
        <title>Molecular diversification of peptide toxins from the tarantula Haplopelma hainanum (Ornithoctonus hainana) venom based on transcriptomic, peptidomic, and genomic analyses.</title>
        <authorList>
            <person name="Tang X."/>
            <person name="Zhang Y."/>
            <person name="Hu W."/>
            <person name="Xu D."/>
            <person name="Tao H."/>
            <person name="Yang X."/>
            <person name="Li Y."/>
            <person name="Jiang L."/>
            <person name="Liang S."/>
        </authorList>
    </citation>
    <scope>NUCLEOTIDE SEQUENCE [LARGE SCALE MRNA]</scope>
    <source>
        <tissue>Venom gland</tissue>
    </source>
</reference>
<keyword id="KW-1015">Disulfide bond</keyword>
<keyword id="KW-0872">Ion channel impairing toxin</keyword>
<keyword id="KW-0960">Knottin</keyword>
<keyword id="KW-0964">Secreted</keyword>
<keyword id="KW-0732">Signal</keyword>
<keyword id="KW-0800">Toxin</keyword>
<name>H13L1_CYRHA</name>
<accession>D2Y2B1</accession>
<feature type="signal peptide" evidence="2">
    <location>
        <begin position="1"/>
        <end position="19"/>
    </location>
</feature>
<feature type="propeptide" id="PRO_0000400711" evidence="1">
    <location>
        <begin position="20"/>
        <end position="50"/>
    </location>
</feature>
<feature type="peptide" id="PRO_0000400712" description="U7-theraphotoxin-Hhn1j">
    <location>
        <begin position="51"/>
        <end position="90"/>
    </location>
</feature>
<feature type="disulfide bond" evidence="1">
    <location>
        <begin position="51"/>
        <end position="65"/>
    </location>
</feature>
<feature type="disulfide bond" evidence="1">
    <location>
        <begin position="58"/>
        <end position="70"/>
    </location>
</feature>
<feature type="disulfide bond" evidence="1">
    <location>
        <begin position="64"/>
        <end position="81"/>
    </location>
</feature>
<dbReference type="EMBL" id="GU292988">
    <property type="protein sequence ID" value="ADB56804.1"/>
    <property type="molecule type" value="mRNA"/>
</dbReference>
<dbReference type="SMR" id="D2Y2B1"/>
<dbReference type="ArachnoServer" id="AS001584">
    <property type="toxin name" value="U7-theraphotoxin-Hhn1j"/>
</dbReference>
<dbReference type="GO" id="GO:0005576">
    <property type="term" value="C:extracellular region"/>
    <property type="evidence" value="ECO:0007669"/>
    <property type="project" value="UniProtKB-SubCell"/>
</dbReference>
<dbReference type="GO" id="GO:0008200">
    <property type="term" value="F:ion channel inhibitor activity"/>
    <property type="evidence" value="ECO:0007669"/>
    <property type="project" value="InterPro"/>
</dbReference>
<dbReference type="GO" id="GO:0090729">
    <property type="term" value="F:toxin activity"/>
    <property type="evidence" value="ECO:0007669"/>
    <property type="project" value="UniProtKB-KW"/>
</dbReference>
<dbReference type="InterPro" id="IPR011696">
    <property type="entry name" value="Huwentoxin-1"/>
</dbReference>
<dbReference type="Pfam" id="PF07740">
    <property type="entry name" value="Toxin_12"/>
    <property type="match status" value="1"/>
</dbReference>
<dbReference type="SUPFAM" id="SSF57059">
    <property type="entry name" value="omega toxin-like"/>
    <property type="match status" value="1"/>
</dbReference>
<organism>
    <name type="scientific">Cyriopagopus hainanus</name>
    <name type="common">Chinese bird spider</name>
    <name type="synonym">Haplopelma hainanum</name>
    <dbReference type="NCBI Taxonomy" id="209901"/>
    <lineage>
        <taxon>Eukaryota</taxon>
        <taxon>Metazoa</taxon>
        <taxon>Ecdysozoa</taxon>
        <taxon>Arthropoda</taxon>
        <taxon>Chelicerata</taxon>
        <taxon>Arachnida</taxon>
        <taxon>Araneae</taxon>
        <taxon>Mygalomorphae</taxon>
        <taxon>Theraphosidae</taxon>
        <taxon>Haplopelma</taxon>
    </lineage>
</organism>